<feature type="chain" id="PRO_0000338986" description="Mitotic-spindle organizing protein 2">
    <location>
        <begin position="1"/>
        <end position="159"/>
    </location>
</feature>
<feature type="region of interest" description="Disordered" evidence="3">
    <location>
        <begin position="87"/>
        <end position="159"/>
    </location>
</feature>
<feature type="compositionally biased region" description="Polar residues" evidence="3">
    <location>
        <begin position="91"/>
        <end position="105"/>
    </location>
</feature>
<feature type="modified residue" description="Omega-N-methylarginine" evidence="6">
    <location>
        <position position="111"/>
    </location>
</feature>
<feature type="modified residue" description="Phosphoserine" evidence="1">
    <location>
        <position position="153"/>
    </location>
</feature>
<comment type="function">
    <text evidence="2">Required for the recruitment and the assembly of the gamma-tubulin ring complex (gTuRC) at the centrosome (By similarity). The gTuRC regulates the minus-end nucleation of alpha-beta tubulin heterodimers that grow into microtubule protafilaments, a critical step in centrosome duplication and spindle formation (By similarity).</text>
</comment>
<comment type="subunit">
    <text evidence="4">Associates with the gamma-tubulin ring complex (gTuRC) consisting of TUBGCP2, TUBGCP3, TUBGCP4, TUBGCP5 and TUBGCP6 and gamma-tubulin TUBG1 or TUBG2; within the complex, interacts with TUBGCP2; the interaction plays a role in gTuRC activation.</text>
</comment>
<comment type="subcellular location">
    <subcellularLocation>
        <location evidence="4">Cytoplasm</location>
        <location evidence="4">Cytoskeleton</location>
        <location evidence="4">Microtubule organizing center</location>
        <location evidence="4">Centrosome</location>
    </subcellularLocation>
    <subcellularLocation>
        <location evidence="4">Cytoplasm</location>
        <location evidence="4">Cytoskeleton</location>
        <location evidence="4">Spindle</location>
    </subcellularLocation>
</comment>
<comment type="similarity">
    <text evidence="5">Belongs to the MOZART2 family.</text>
</comment>
<accession>Q9CQ25</accession>
<dbReference type="EMBL" id="AK010544">
    <property type="protein sequence ID" value="BAB27018.1"/>
    <property type="molecule type" value="mRNA"/>
</dbReference>
<dbReference type="EMBL" id="AK011255">
    <property type="protein sequence ID" value="BAB27497.1"/>
    <property type="molecule type" value="mRNA"/>
</dbReference>
<dbReference type="EMBL" id="BC027550">
    <property type="protein sequence ID" value="AAH27550.1"/>
    <property type="molecule type" value="mRNA"/>
</dbReference>
<dbReference type="CCDS" id="CCDS27979.1"/>
<dbReference type="RefSeq" id="NP_001345932.1">
    <property type="nucleotide sequence ID" value="NM_001359003.1"/>
</dbReference>
<dbReference type="RefSeq" id="NP_083630.1">
    <property type="nucleotide sequence ID" value="NM_029354.3"/>
</dbReference>
<dbReference type="RefSeq" id="XP_006522651.1">
    <property type="nucleotide sequence ID" value="XM_006522588.2"/>
</dbReference>
<dbReference type="SMR" id="Q9CQ25"/>
<dbReference type="BioGRID" id="215139">
    <property type="interactions" value="25"/>
</dbReference>
<dbReference type="FunCoup" id="Q9CQ25">
    <property type="interactions" value="634"/>
</dbReference>
<dbReference type="IntAct" id="Q9CQ25">
    <property type="interactions" value="18"/>
</dbReference>
<dbReference type="MINT" id="Q9CQ25"/>
<dbReference type="STRING" id="10090.ENSMUSP00000023351"/>
<dbReference type="GlyGen" id="Q9CQ25">
    <property type="glycosylation" value="1 site, 1 O-linked glycan (1 site)"/>
</dbReference>
<dbReference type="iPTMnet" id="Q9CQ25"/>
<dbReference type="PhosphoSitePlus" id="Q9CQ25"/>
<dbReference type="PaxDb" id="10090-ENSMUSP00000023351"/>
<dbReference type="PeptideAtlas" id="Q9CQ25"/>
<dbReference type="ProteomicsDB" id="286132"/>
<dbReference type="Pumba" id="Q9CQ25"/>
<dbReference type="TopDownProteomics" id="Q9CQ25"/>
<dbReference type="DNASU" id="72083"/>
<dbReference type="Ensembl" id="ENSMUST00000023351.11">
    <property type="protein sequence ID" value="ENSMUSP00000023351.5"/>
    <property type="gene ID" value="ENSMUSG00000022671.14"/>
</dbReference>
<dbReference type="Ensembl" id="ENSMUST00000117136.2">
    <property type="protein sequence ID" value="ENSMUSP00000113832.2"/>
    <property type="gene ID" value="ENSMUSG00000022671.14"/>
</dbReference>
<dbReference type="GeneID" id="72083"/>
<dbReference type="KEGG" id="mmu:72083"/>
<dbReference type="UCSC" id="uc007yhv.1">
    <property type="organism name" value="mouse"/>
</dbReference>
<dbReference type="AGR" id="MGI:1922845"/>
<dbReference type="CTD" id="72083"/>
<dbReference type="MGI" id="MGI:1922845">
    <property type="gene designation" value="Mzt2"/>
</dbReference>
<dbReference type="VEuPathDB" id="HostDB:ENSMUSG00000022671"/>
<dbReference type="eggNOG" id="ENOG502SCQ3">
    <property type="taxonomic scope" value="Eukaryota"/>
</dbReference>
<dbReference type="GeneTree" id="ENSGT00390000014845"/>
<dbReference type="HOGENOM" id="CLU_105461_0_0_1"/>
<dbReference type="InParanoid" id="Q9CQ25"/>
<dbReference type="OMA" id="YNPADAC"/>
<dbReference type="OrthoDB" id="10064769at2759"/>
<dbReference type="PhylomeDB" id="Q9CQ25"/>
<dbReference type="TreeFam" id="TF333013"/>
<dbReference type="Reactome" id="R-MMU-380270">
    <property type="pathway name" value="Recruitment of mitotic centrosome proteins and complexes"/>
</dbReference>
<dbReference type="Reactome" id="R-MMU-380320">
    <property type="pathway name" value="Recruitment of NuMA to mitotic centrosomes"/>
</dbReference>
<dbReference type="BioGRID-ORCS" id="72083">
    <property type="hits" value="7 hits in 78 CRISPR screens"/>
</dbReference>
<dbReference type="CD-CODE" id="01CA17F3">
    <property type="entry name" value="Centrosome"/>
</dbReference>
<dbReference type="ChiTaRS" id="Mzt2">
    <property type="organism name" value="mouse"/>
</dbReference>
<dbReference type="PRO" id="PR:Q9CQ25"/>
<dbReference type="Proteomes" id="UP000000589">
    <property type="component" value="Chromosome 16"/>
</dbReference>
<dbReference type="RNAct" id="Q9CQ25">
    <property type="molecule type" value="protein"/>
</dbReference>
<dbReference type="Bgee" id="ENSMUSG00000022671">
    <property type="expression patterns" value="Expressed in spermatid and 251 other cell types or tissues"/>
</dbReference>
<dbReference type="ExpressionAtlas" id="Q9CQ25">
    <property type="expression patterns" value="baseline and differential"/>
</dbReference>
<dbReference type="GO" id="GO:0005813">
    <property type="term" value="C:centrosome"/>
    <property type="evidence" value="ECO:0000250"/>
    <property type="project" value="UniProtKB"/>
</dbReference>
<dbReference type="GO" id="GO:0005737">
    <property type="term" value="C:cytoplasm"/>
    <property type="evidence" value="ECO:0007669"/>
    <property type="project" value="UniProtKB-KW"/>
</dbReference>
<dbReference type="GO" id="GO:0000931">
    <property type="term" value="C:gamma-tubulin ring complex"/>
    <property type="evidence" value="ECO:0000250"/>
    <property type="project" value="UniProtKB"/>
</dbReference>
<dbReference type="GO" id="GO:0005819">
    <property type="term" value="C:spindle"/>
    <property type="evidence" value="ECO:0000250"/>
    <property type="project" value="UniProtKB"/>
</dbReference>
<dbReference type="InterPro" id="IPR024332">
    <property type="entry name" value="MOZART2"/>
</dbReference>
<dbReference type="PANTHER" id="PTHR28578:SF2">
    <property type="entry name" value="MITOTIC-SPINDLE ORGANIZING PROTEIN 2"/>
    <property type="match status" value="1"/>
</dbReference>
<dbReference type="PANTHER" id="PTHR28578">
    <property type="entry name" value="MITOTIC-SPINDLE ORGANIZING PROTEIN 2A-RELATED"/>
    <property type="match status" value="1"/>
</dbReference>
<dbReference type="Pfam" id="PF12926">
    <property type="entry name" value="MOZART2"/>
    <property type="match status" value="1"/>
</dbReference>
<protein>
    <recommendedName>
        <fullName>Mitotic-spindle organizing protein 2</fullName>
    </recommendedName>
    <alternativeName>
        <fullName>Mitotic-spindle organizing protein associated with a ring of gamma-tubulin 2B</fullName>
    </alternativeName>
</protein>
<proteinExistence type="evidence at protein level"/>
<gene>
    <name type="primary">Mzt2</name>
    <name type="synonym">Fam128b</name>
    <name type="synonym">Mozart2</name>
</gene>
<keyword id="KW-0963">Cytoplasm</keyword>
<keyword id="KW-0206">Cytoskeleton</keyword>
<keyword id="KW-0488">Methylation</keyword>
<keyword id="KW-0597">Phosphoprotein</keyword>
<keyword id="KW-1185">Reference proteome</keyword>
<reference key="1">
    <citation type="journal article" date="2005" name="Science">
        <title>The transcriptional landscape of the mammalian genome.</title>
        <authorList>
            <person name="Carninci P."/>
            <person name="Kasukawa T."/>
            <person name="Katayama S."/>
            <person name="Gough J."/>
            <person name="Frith M.C."/>
            <person name="Maeda N."/>
            <person name="Oyama R."/>
            <person name="Ravasi T."/>
            <person name="Lenhard B."/>
            <person name="Wells C."/>
            <person name="Kodzius R."/>
            <person name="Shimokawa K."/>
            <person name="Bajic V.B."/>
            <person name="Brenner S.E."/>
            <person name="Batalov S."/>
            <person name="Forrest A.R."/>
            <person name="Zavolan M."/>
            <person name="Davis M.J."/>
            <person name="Wilming L.G."/>
            <person name="Aidinis V."/>
            <person name="Allen J.E."/>
            <person name="Ambesi-Impiombato A."/>
            <person name="Apweiler R."/>
            <person name="Aturaliya R.N."/>
            <person name="Bailey T.L."/>
            <person name="Bansal M."/>
            <person name="Baxter L."/>
            <person name="Beisel K.W."/>
            <person name="Bersano T."/>
            <person name="Bono H."/>
            <person name="Chalk A.M."/>
            <person name="Chiu K.P."/>
            <person name="Choudhary V."/>
            <person name="Christoffels A."/>
            <person name="Clutterbuck D.R."/>
            <person name="Crowe M.L."/>
            <person name="Dalla E."/>
            <person name="Dalrymple B.P."/>
            <person name="de Bono B."/>
            <person name="Della Gatta G."/>
            <person name="di Bernardo D."/>
            <person name="Down T."/>
            <person name="Engstrom P."/>
            <person name="Fagiolini M."/>
            <person name="Faulkner G."/>
            <person name="Fletcher C.F."/>
            <person name="Fukushima T."/>
            <person name="Furuno M."/>
            <person name="Futaki S."/>
            <person name="Gariboldi M."/>
            <person name="Georgii-Hemming P."/>
            <person name="Gingeras T.R."/>
            <person name="Gojobori T."/>
            <person name="Green R.E."/>
            <person name="Gustincich S."/>
            <person name="Harbers M."/>
            <person name="Hayashi Y."/>
            <person name="Hensch T.K."/>
            <person name="Hirokawa N."/>
            <person name="Hill D."/>
            <person name="Huminiecki L."/>
            <person name="Iacono M."/>
            <person name="Ikeo K."/>
            <person name="Iwama A."/>
            <person name="Ishikawa T."/>
            <person name="Jakt M."/>
            <person name="Kanapin A."/>
            <person name="Katoh M."/>
            <person name="Kawasawa Y."/>
            <person name="Kelso J."/>
            <person name="Kitamura H."/>
            <person name="Kitano H."/>
            <person name="Kollias G."/>
            <person name="Krishnan S.P."/>
            <person name="Kruger A."/>
            <person name="Kummerfeld S.K."/>
            <person name="Kurochkin I.V."/>
            <person name="Lareau L.F."/>
            <person name="Lazarevic D."/>
            <person name="Lipovich L."/>
            <person name="Liu J."/>
            <person name="Liuni S."/>
            <person name="McWilliam S."/>
            <person name="Madan Babu M."/>
            <person name="Madera M."/>
            <person name="Marchionni L."/>
            <person name="Matsuda H."/>
            <person name="Matsuzawa S."/>
            <person name="Miki H."/>
            <person name="Mignone F."/>
            <person name="Miyake S."/>
            <person name="Morris K."/>
            <person name="Mottagui-Tabar S."/>
            <person name="Mulder N."/>
            <person name="Nakano N."/>
            <person name="Nakauchi H."/>
            <person name="Ng P."/>
            <person name="Nilsson R."/>
            <person name="Nishiguchi S."/>
            <person name="Nishikawa S."/>
            <person name="Nori F."/>
            <person name="Ohara O."/>
            <person name="Okazaki Y."/>
            <person name="Orlando V."/>
            <person name="Pang K.C."/>
            <person name="Pavan W.J."/>
            <person name="Pavesi G."/>
            <person name="Pesole G."/>
            <person name="Petrovsky N."/>
            <person name="Piazza S."/>
            <person name="Reed J."/>
            <person name="Reid J.F."/>
            <person name="Ring B.Z."/>
            <person name="Ringwald M."/>
            <person name="Rost B."/>
            <person name="Ruan Y."/>
            <person name="Salzberg S.L."/>
            <person name="Sandelin A."/>
            <person name="Schneider C."/>
            <person name="Schoenbach C."/>
            <person name="Sekiguchi K."/>
            <person name="Semple C.A."/>
            <person name="Seno S."/>
            <person name="Sessa L."/>
            <person name="Sheng Y."/>
            <person name="Shibata Y."/>
            <person name="Shimada H."/>
            <person name="Shimada K."/>
            <person name="Silva D."/>
            <person name="Sinclair B."/>
            <person name="Sperling S."/>
            <person name="Stupka E."/>
            <person name="Sugiura K."/>
            <person name="Sultana R."/>
            <person name="Takenaka Y."/>
            <person name="Taki K."/>
            <person name="Tammoja K."/>
            <person name="Tan S.L."/>
            <person name="Tang S."/>
            <person name="Taylor M.S."/>
            <person name="Tegner J."/>
            <person name="Teichmann S.A."/>
            <person name="Ueda H.R."/>
            <person name="van Nimwegen E."/>
            <person name="Verardo R."/>
            <person name="Wei C.L."/>
            <person name="Yagi K."/>
            <person name="Yamanishi H."/>
            <person name="Zabarovsky E."/>
            <person name="Zhu S."/>
            <person name="Zimmer A."/>
            <person name="Hide W."/>
            <person name="Bult C."/>
            <person name="Grimmond S.M."/>
            <person name="Teasdale R.D."/>
            <person name="Liu E.T."/>
            <person name="Brusic V."/>
            <person name="Quackenbush J."/>
            <person name="Wahlestedt C."/>
            <person name="Mattick J.S."/>
            <person name="Hume D.A."/>
            <person name="Kai C."/>
            <person name="Sasaki D."/>
            <person name="Tomaru Y."/>
            <person name="Fukuda S."/>
            <person name="Kanamori-Katayama M."/>
            <person name="Suzuki M."/>
            <person name="Aoki J."/>
            <person name="Arakawa T."/>
            <person name="Iida J."/>
            <person name="Imamura K."/>
            <person name="Itoh M."/>
            <person name="Kato T."/>
            <person name="Kawaji H."/>
            <person name="Kawagashira N."/>
            <person name="Kawashima T."/>
            <person name="Kojima M."/>
            <person name="Kondo S."/>
            <person name="Konno H."/>
            <person name="Nakano K."/>
            <person name="Ninomiya N."/>
            <person name="Nishio T."/>
            <person name="Okada M."/>
            <person name="Plessy C."/>
            <person name="Shibata K."/>
            <person name="Shiraki T."/>
            <person name="Suzuki S."/>
            <person name="Tagami M."/>
            <person name="Waki K."/>
            <person name="Watahiki A."/>
            <person name="Okamura-Oho Y."/>
            <person name="Suzuki H."/>
            <person name="Kawai J."/>
            <person name="Hayashizaki Y."/>
        </authorList>
    </citation>
    <scope>NUCLEOTIDE SEQUENCE [LARGE SCALE MRNA]</scope>
    <source>
        <strain>C57BL/6J</strain>
    </source>
</reference>
<reference key="2">
    <citation type="journal article" date="2004" name="Genome Res.">
        <title>The status, quality, and expansion of the NIH full-length cDNA project: the Mammalian Gene Collection (MGC).</title>
        <authorList>
            <consortium name="The MGC Project Team"/>
        </authorList>
    </citation>
    <scope>NUCLEOTIDE SEQUENCE [LARGE SCALE MRNA]</scope>
    <source>
        <strain>Czech II</strain>
        <tissue>Lung</tissue>
    </source>
</reference>
<reference key="3">
    <citation type="journal article" date="2010" name="Cell">
        <title>A tissue-specific atlas of mouse protein phosphorylation and expression.</title>
        <authorList>
            <person name="Huttlin E.L."/>
            <person name="Jedrychowski M.P."/>
            <person name="Elias J.E."/>
            <person name="Goswami T."/>
            <person name="Rad R."/>
            <person name="Beausoleil S.A."/>
            <person name="Villen J."/>
            <person name="Haas W."/>
            <person name="Sowa M.E."/>
            <person name="Gygi S.P."/>
        </authorList>
    </citation>
    <scope>IDENTIFICATION BY MASS SPECTROMETRY [LARGE SCALE ANALYSIS]</scope>
    <source>
        <tissue>Brain</tissue>
        <tissue>Liver</tissue>
        <tissue>Lung</tissue>
        <tissue>Spleen</tissue>
        <tissue>Testis</tissue>
    </source>
</reference>
<reference key="4">
    <citation type="journal article" date="2010" name="Science">
        <title>Systematic analysis of human protein complexes identifies chromosome segregation proteins.</title>
        <authorList>
            <person name="Hutchins J.R."/>
            <person name="Toyoda Y."/>
            <person name="Hegemann B."/>
            <person name="Poser I."/>
            <person name="Heriche J.K."/>
            <person name="Sykora M.M."/>
            <person name="Augsburg M."/>
            <person name="Hudecz O."/>
            <person name="Buschhorn B.A."/>
            <person name="Bulkescher J."/>
            <person name="Conrad C."/>
            <person name="Comartin D."/>
            <person name="Schleiffer A."/>
            <person name="Sarov M."/>
            <person name="Pozniakovsky A."/>
            <person name="Slabicki M.M."/>
            <person name="Schloissnig S."/>
            <person name="Steinmacher I."/>
            <person name="Leuschner M."/>
            <person name="Ssykor A."/>
            <person name="Lawo S."/>
            <person name="Pelletier L."/>
            <person name="Stark H."/>
            <person name="Nasmyth K."/>
            <person name="Ellenberg J."/>
            <person name="Durbin R."/>
            <person name="Buchholz F."/>
            <person name="Mechtler K."/>
            <person name="Hyman A.A."/>
            <person name="Peters J.M."/>
        </authorList>
    </citation>
    <scope>SUBCELLULAR LOCATION</scope>
    <scope>INTERACTION WITH TUBG1</scope>
</reference>
<reference key="5">
    <citation type="journal article" date="2014" name="Mol. Cell. Proteomics">
        <title>Immunoaffinity enrichment and mass spectrometry analysis of protein methylation.</title>
        <authorList>
            <person name="Guo A."/>
            <person name="Gu H."/>
            <person name="Zhou J."/>
            <person name="Mulhern D."/>
            <person name="Wang Y."/>
            <person name="Lee K.A."/>
            <person name="Yang V."/>
            <person name="Aguiar M."/>
            <person name="Kornhauser J."/>
            <person name="Jia X."/>
            <person name="Ren J."/>
            <person name="Beausoleil S.A."/>
            <person name="Silva J.C."/>
            <person name="Vemulapalli V."/>
            <person name="Bedford M.T."/>
            <person name="Comb M.J."/>
        </authorList>
    </citation>
    <scope>METHYLATION [LARGE SCALE ANALYSIS] AT ARG-111</scope>
    <scope>IDENTIFICATION BY MASS SPECTROMETRY [LARGE SCALE ANALYSIS]</scope>
    <source>
        <tissue>Brain</tissue>
        <tissue>Embryo</tissue>
    </source>
</reference>
<organism>
    <name type="scientific">Mus musculus</name>
    <name type="common">Mouse</name>
    <dbReference type="NCBI Taxonomy" id="10090"/>
    <lineage>
        <taxon>Eukaryota</taxon>
        <taxon>Metazoa</taxon>
        <taxon>Chordata</taxon>
        <taxon>Craniata</taxon>
        <taxon>Vertebrata</taxon>
        <taxon>Euteleostomi</taxon>
        <taxon>Mammalia</taxon>
        <taxon>Eutheria</taxon>
        <taxon>Euarchontoglires</taxon>
        <taxon>Glires</taxon>
        <taxon>Rodentia</taxon>
        <taxon>Myomorpha</taxon>
        <taxon>Muroidea</taxon>
        <taxon>Muridae</taxon>
        <taxon>Murinae</taxon>
        <taxon>Mus</taxon>
        <taxon>Mus</taxon>
    </lineage>
</organism>
<name>MZT2_MOUSE</name>
<evidence type="ECO:0000250" key="1">
    <source>
        <dbReference type="UniProtKB" id="Q6NZ67"/>
    </source>
</evidence>
<evidence type="ECO:0000250" key="2">
    <source>
        <dbReference type="UniProtKB" id="Q6P582"/>
    </source>
</evidence>
<evidence type="ECO:0000256" key="3">
    <source>
        <dbReference type="SAM" id="MobiDB-lite"/>
    </source>
</evidence>
<evidence type="ECO:0000269" key="4">
    <source>
    </source>
</evidence>
<evidence type="ECO:0000305" key="5"/>
<evidence type="ECO:0007744" key="6">
    <source>
    </source>
</evidence>
<sequence length="159" mass="16524">MAAAAAAAGGAALAVSTGLETATLQKLALRRKKVLGAEEMELYELAQAAGAAIDPDVFKILVDLLNLNVAPLAVFQMLKSMCAGQRLASDPQDSVPISLSTSTSETRGRNRGGPILGNVTISAERGSRERPIQRMPRQPSATRLPKVGGSGKSNSRSSP</sequence>